<gene>
    <name evidence="1" type="primary">rplT</name>
    <name type="ordered locus">BBta_0215</name>
</gene>
<name>RL20_BRASB</name>
<feature type="chain" id="PRO_1000048932" description="Large ribosomal subunit protein bL20">
    <location>
        <begin position="1"/>
        <end position="119"/>
    </location>
</feature>
<accession>A5E8L8</accession>
<reference key="1">
    <citation type="journal article" date="2007" name="Science">
        <title>Legumes symbioses: absence of nod genes in photosynthetic bradyrhizobia.</title>
        <authorList>
            <person name="Giraud E."/>
            <person name="Moulin L."/>
            <person name="Vallenet D."/>
            <person name="Barbe V."/>
            <person name="Cytryn E."/>
            <person name="Avarre J.-C."/>
            <person name="Jaubert M."/>
            <person name="Simon D."/>
            <person name="Cartieaux F."/>
            <person name="Prin Y."/>
            <person name="Bena G."/>
            <person name="Hannibal L."/>
            <person name="Fardoux J."/>
            <person name="Kojadinovic M."/>
            <person name="Vuillet L."/>
            <person name="Lajus A."/>
            <person name="Cruveiller S."/>
            <person name="Rouy Z."/>
            <person name="Mangenot S."/>
            <person name="Segurens B."/>
            <person name="Dossat C."/>
            <person name="Franck W.L."/>
            <person name="Chang W.-S."/>
            <person name="Saunders E."/>
            <person name="Bruce D."/>
            <person name="Richardson P."/>
            <person name="Normand P."/>
            <person name="Dreyfus B."/>
            <person name="Pignol D."/>
            <person name="Stacey G."/>
            <person name="Emerich D."/>
            <person name="Vermeglio A."/>
            <person name="Medigue C."/>
            <person name="Sadowsky M."/>
        </authorList>
    </citation>
    <scope>NUCLEOTIDE SEQUENCE [LARGE SCALE GENOMIC DNA]</scope>
    <source>
        <strain>BTAi1 / ATCC BAA-1182</strain>
    </source>
</reference>
<comment type="function">
    <text evidence="1">Binds directly to 23S ribosomal RNA and is necessary for the in vitro assembly process of the 50S ribosomal subunit. It is not involved in the protein synthesizing functions of that subunit.</text>
</comment>
<comment type="similarity">
    <text evidence="1">Belongs to the bacterial ribosomal protein bL20 family.</text>
</comment>
<sequence>MSRVKRGVTAHAKHKKVFKAAKGYYGRRKNTIRTAKQAVEKAGQYAFRDRKRKKRTFRALWIQRLNAAVRPFELTYSRFIDGLSKSGITVDRKVLSDLAINEPAAFQAIVEKAKAALAA</sequence>
<proteinExistence type="inferred from homology"/>
<organism>
    <name type="scientific">Bradyrhizobium sp. (strain BTAi1 / ATCC BAA-1182)</name>
    <dbReference type="NCBI Taxonomy" id="288000"/>
    <lineage>
        <taxon>Bacteria</taxon>
        <taxon>Pseudomonadati</taxon>
        <taxon>Pseudomonadota</taxon>
        <taxon>Alphaproteobacteria</taxon>
        <taxon>Hyphomicrobiales</taxon>
        <taxon>Nitrobacteraceae</taxon>
        <taxon>Bradyrhizobium</taxon>
    </lineage>
</organism>
<protein>
    <recommendedName>
        <fullName evidence="1">Large ribosomal subunit protein bL20</fullName>
    </recommendedName>
    <alternativeName>
        <fullName evidence="2">50S ribosomal protein L20</fullName>
    </alternativeName>
</protein>
<dbReference type="EMBL" id="CP000494">
    <property type="protein sequence ID" value="ABQ32512.1"/>
    <property type="molecule type" value="Genomic_DNA"/>
</dbReference>
<dbReference type="RefSeq" id="WP_012040570.1">
    <property type="nucleotide sequence ID" value="NC_009485.1"/>
</dbReference>
<dbReference type="SMR" id="A5E8L8"/>
<dbReference type="STRING" id="288000.BBta_0215"/>
<dbReference type="KEGG" id="bbt:BBta_0215"/>
<dbReference type="eggNOG" id="COG0292">
    <property type="taxonomic scope" value="Bacteria"/>
</dbReference>
<dbReference type="HOGENOM" id="CLU_123265_0_1_5"/>
<dbReference type="OrthoDB" id="9808966at2"/>
<dbReference type="Proteomes" id="UP000000246">
    <property type="component" value="Chromosome"/>
</dbReference>
<dbReference type="GO" id="GO:1990904">
    <property type="term" value="C:ribonucleoprotein complex"/>
    <property type="evidence" value="ECO:0007669"/>
    <property type="project" value="UniProtKB-KW"/>
</dbReference>
<dbReference type="GO" id="GO:0005840">
    <property type="term" value="C:ribosome"/>
    <property type="evidence" value="ECO:0007669"/>
    <property type="project" value="UniProtKB-KW"/>
</dbReference>
<dbReference type="GO" id="GO:0019843">
    <property type="term" value="F:rRNA binding"/>
    <property type="evidence" value="ECO:0007669"/>
    <property type="project" value="UniProtKB-UniRule"/>
</dbReference>
<dbReference type="GO" id="GO:0003735">
    <property type="term" value="F:structural constituent of ribosome"/>
    <property type="evidence" value="ECO:0007669"/>
    <property type="project" value="InterPro"/>
</dbReference>
<dbReference type="GO" id="GO:0000027">
    <property type="term" value="P:ribosomal large subunit assembly"/>
    <property type="evidence" value="ECO:0007669"/>
    <property type="project" value="UniProtKB-UniRule"/>
</dbReference>
<dbReference type="GO" id="GO:0006412">
    <property type="term" value="P:translation"/>
    <property type="evidence" value="ECO:0007669"/>
    <property type="project" value="InterPro"/>
</dbReference>
<dbReference type="CDD" id="cd07026">
    <property type="entry name" value="Ribosomal_L20"/>
    <property type="match status" value="1"/>
</dbReference>
<dbReference type="FunFam" id="1.10.1900.20:FF:000001">
    <property type="entry name" value="50S ribosomal protein L20"/>
    <property type="match status" value="1"/>
</dbReference>
<dbReference type="Gene3D" id="6.10.160.10">
    <property type="match status" value="1"/>
</dbReference>
<dbReference type="Gene3D" id="1.10.1900.20">
    <property type="entry name" value="Ribosomal protein L20"/>
    <property type="match status" value="1"/>
</dbReference>
<dbReference type="HAMAP" id="MF_00382">
    <property type="entry name" value="Ribosomal_bL20"/>
    <property type="match status" value="1"/>
</dbReference>
<dbReference type="InterPro" id="IPR005813">
    <property type="entry name" value="Ribosomal_bL20"/>
</dbReference>
<dbReference type="InterPro" id="IPR049946">
    <property type="entry name" value="RIBOSOMAL_L20_CS"/>
</dbReference>
<dbReference type="InterPro" id="IPR035566">
    <property type="entry name" value="Ribosomal_protein_bL20_C"/>
</dbReference>
<dbReference type="NCBIfam" id="TIGR01032">
    <property type="entry name" value="rplT_bact"/>
    <property type="match status" value="1"/>
</dbReference>
<dbReference type="PANTHER" id="PTHR10986">
    <property type="entry name" value="39S RIBOSOMAL PROTEIN L20"/>
    <property type="match status" value="1"/>
</dbReference>
<dbReference type="Pfam" id="PF00453">
    <property type="entry name" value="Ribosomal_L20"/>
    <property type="match status" value="1"/>
</dbReference>
<dbReference type="PRINTS" id="PR00062">
    <property type="entry name" value="RIBOSOMALL20"/>
</dbReference>
<dbReference type="SUPFAM" id="SSF74731">
    <property type="entry name" value="Ribosomal protein L20"/>
    <property type="match status" value="1"/>
</dbReference>
<dbReference type="PROSITE" id="PS00937">
    <property type="entry name" value="RIBOSOMAL_L20"/>
    <property type="match status" value="1"/>
</dbReference>
<keyword id="KW-1185">Reference proteome</keyword>
<keyword id="KW-0687">Ribonucleoprotein</keyword>
<keyword id="KW-0689">Ribosomal protein</keyword>
<keyword id="KW-0694">RNA-binding</keyword>
<keyword id="KW-0699">rRNA-binding</keyword>
<evidence type="ECO:0000255" key="1">
    <source>
        <dbReference type="HAMAP-Rule" id="MF_00382"/>
    </source>
</evidence>
<evidence type="ECO:0000305" key="2"/>